<keyword id="KW-1185">Reference proteome</keyword>
<keyword id="KW-0687">Ribonucleoprotein</keyword>
<keyword id="KW-0689">Ribosomal protein</keyword>
<keyword id="KW-0694">RNA-binding</keyword>
<keyword id="KW-0699">rRNA-binding</keyword>
<keyword id="KW-0820">tRNA-binding</keyword>
<proteinExistence type="inferred from homology"/>
<organism>
    <name type="scientific">Streptococcus pyogenes serotype M1</name>
    <dbReference type="NCBI Taxonomy" id="301447"/>
    <lineage>
        <taxon>Bacteria</taxon>
        <taxon>Bacillati</taxon>
        <taxon>Bacillota</taxon>
        <taxon>Bacilli</taxon>
        <taxon>Lactobacillales</taxon>
        <taxon>Streptococcaceae</taxon>
        <taxon>Streptococcus</taxon>
    </lineage>
</organism>
<dbReference type="EMBL" id="AE004092">
    <property type="protein sequence ID" value="AAK33206.1"/>
    <property type="molecule type" value="Genomic_DNA"/>
</dbReference>
<dbReference type="EMBL" id="CP000017">
    <property type="protein sequence ID" value="AAZ50687.1"/>
    <property type="molecule type" value="Genomic_DNA"/>
</dbReference>
<dbReference type="RefSeq" id="NP_268484.1">
    <property type="nucleotide sequence ID" value="NC_002737.2"/>
</dbReference>
<dbReference type="SMR" id="P66394"/>
<dbReference type="PaxDb" id="1314-HKU360_00101"/>
<dbReference type="KEGG" id="spy:SPy_0077"/>
<dbReference type="KEGG" id="spz:M5005_Spy0068"/>
<dbReference type="PATRIC" id="fig|160490.10.peg.68"/>
<dbReference type="HOGENOM" id="CLU_103849_1_1_9"/>
<dbReference type="OMA" id="MNVKRLM"/>
<dbReference type="PRO" id="PR:P66394"/>
<dbReference type="Proteomes" id="UP000000750">
    <property type="component" value="Chromosome"/>
</dbReference>
<dbReference type="GO" id="GO:0005829">
    <property type="term" value="C:cytosol"/>
    <property type="evidence" value="ECO:0007669"/>
    <property type="project" value="TreeGrafter"/>
</dbReference>
<dbReference type="GO" id="GO:0015935">
    <property type="term" value="C:small ribosomal subunit"/>
    <property type="evidence" value="ECO:0007669"/>
    <property type="project" value="TreeGrafter"/>
</dbReference>
<dbReference type="GO" id="GO:0019843">
    <property type="term" value="F:rRNA binding"/>
    <property type="evidence" value="ECO:0007669"/>
    <property type="project" value="UniProtKB-UniRule"/>
</dbReference>
<dbReference type="GO" id="GO:0003735">
    <property type="term" value="F:structural constituent of ribosome"/>
    <property type="evidence" value="ECO:0007669"/>
    <property type="project" value="InterPro"/>
</dbReference>
<dbReference type="GO" id="GO:0000049">
    <property type="term" value="F:tRNA binding"/>
    <property type="evidence" value="ECO:0007669"/>
    <property type="project" value="UniProtKB-UniRule"/>
</dbReference>
<dbReference type="GO" id="GO:0006412">
    <property type="term" value="P:translation"/>
    <property type="evidence" value="ECO:0007669"/>
    <property type="project" value="UniProtKB-UniRule"/>
</dbReference>
<dbReference type="FunFam" id="1.10.8.50:FF:000001">
    <property type="entry name" value="30S ribosomal protein S13"/>
    <property type="match status" value="1"/>
</dbReference>
<dbReference type="FunFam" id="4.10.910.10:FF:000001">
    <property type="entry name" value="30S ribosomal protein S13"/>
    <property type="match status" value="1"/>
</dbReference>
<dbReference type="Gene3D" id="1.10.8.50">
    <property type="match status" value="1"/>
</dbReference>
<dbReference type="Gene3D" id="4.10.910.10">
    <property type="entry name" value="30s ribosomal protein s13, domain 2"/>
    <property type="match status" value="1"/>
</dbReference>
<dbReference type="HAMAP" id="MF_01315">
    <property type="entry name" value="Ribosomal_uS13"/>
    <property type="match status" value="1"/>
</dbReference>
<dbReference type="InterPro" id="IPR027437">
    <property type="entry name" value="Rbsml_uS13_C"/>
</dbReference>
<dbReference type="InterPro" id="IPR001892">
    <property type="entry name" value="Ribosomal_uS13"/>
</dbReference>
<dbReference type="InterPro" id="IPR010979">
    <property type="entry name" value="Ribosomal_uS13-like_H2TH"/>
</dbReference>
<dbReference type="InterPro" id="IPR019980">
    <property type="entry name" value="Ribosomal_uS13_bac-type"/>
</dbReference>
<dbReference type="InterPro" id="IPR018269">
    <property type="entry name" value="Ribosomal_uS13_CS"/>
</dbReference>
<dbReference type="NCBIfam" id="TIGR03631">
    <property type="entry name" value="uS13_bact"/>
    <property type="match status" value="1"/>
</dbReference>
<dbReference type="PANTHER" id="PTHR10871">
    <property type="entry name" value="30S RIBOSOMAL PROTEIN S13/40S RIBOSOMAL PROTEIN S18"/>
    <property type="match status" value="1"/>
</dbReference>
<dbReference type="PANTHER" id="PTHR10871:SF1">
    <property type="entry name" value="SMALL RIBOSOMAL SUBUNIT PROTEIN US13M"/>
    <property type="match status" value="1"/>
</dbReference>
<dbReference type="Pfam" id="PF00416">
    <property type="entry name" value="Ribosomal_S13"/>
    <property type="match status" value="1"/>
</dbReference>
<dbReference type="PIRSF" id="PIRSF002134">
    <property type="entry name" value="Ribosomal_S13"/>
    <property type="match status" value="1"/>
</dbReference>
<dbReference type="SUPFAM" id="SSF46946">
    <property type="entry name" value="S13-like H2TH domain"/>
    <property type="match status" value="1"/>
</dbReference>
<dbReference type="PROSITE" id="PS00646">
    <property type="entry name" value="RIBOSOMAL_S13_1"/>
    <property type="match status" value="1"/>
</dbReference>
<dbReference type="PROSITE" id="PS50159">
    <property type="entry name" value="RIBOSOMAL_S13_2"/>
    <property type="match status" value="1"/>
</dbReference>
<gene>
    <name evidence="1" type="primary">rpsM</name>
    <name type="ordered locus">SPy_0077</name>
    <name type="ordered locus">M5005_Spy0068</name>
</gene>
<reference key="1">
    <citation type="journal article" date="2001" name="Proc. Natl. Acad. Sci. U.S.A.">
        <title>Complete genome sequence of an M1 strain of Streptococcus pyogenes.</title>
        <authorList>
            <person name="Ferretti J.J."/>
            <person name="McShan W.M."/>
            <person name="Ajdic D.J."/>
            <person name="Savic D.J."/>
            <person name="Savic G."/>
            <person name="Lyon K."/>
            <person name="Primeaux C."/>
            <person name="Sezate S."/>
            <person name="Suvorov A.N."/>
            <person name="Kenton S."/>
            <person name="Lai H.S."/>
            <person name="Lin S.P."/>
            <person name="Qian Y."/>
            <person name="Jia H.G."/>
            <person name="Najar F.Z."/>
            <person name="Ren Q."/>
            <person name="Zhu H."/>
            <person name="Song L."/>
            <person name="White J."/>
            <person name="Yuan X."/>
            <person name="Clifton S.W."/>
            <person name="Roe B.A."/>
            <person name="McLaughlin R.E."/>
        </authorList>
    </citation>
    <scope>NUCLEOTIDE SEQUENCE [LARGE SCALE GENOMIC DNA]</scope>
    <source>
        <strain>ATCC 700294 / SF370 / Serotype M1</strain>
    </source>
</reference>
<reference key="2">
    <citation type="journal article" date="2005" name="J. Infect. Dis.">
        <title>Evolutionary origin and emergence of a highly successful clone of serotype M1 group A Streptococcus involved multiple horizontal gene transfer events.</title>
        <authorList>
            <person name="Sumby P."/>
            <person name="Porcella S.F."/>
            <person name="Madrigal A.G."/>
            <person name="Barbian K.D."/>
            <person name="Virtaneva K."/>
            <person name="Ricklefs S.M."/>
            <person name="Sturdevant D.E."/>
            <person name="Graham M.R."/>
            <person name="Vuopio-Varkila J."/>
            <person name="Hoe N.P."/>
            <person name="Musser J.M."/>
        </authorList>
    </citation>
    <scope>NUCLEOTIDE SEQUENCE [LARGE SCALE GENOMIC DNA]</scope>
    <source>
        <strain>ATCC BAA-947 / MGAS5005 / Serotype M1</strain>
    </source>
</reference>
<accession>P66394</accession>
<accession>Q491N1</accession>
<accession>Q9A1V1</accession>
<comment type="function">
    <text evidence="1">Located at the top of the head of the 30S subunit, it contacts several helices of the 16S rRNA. In the 70S ribosome it contacts the 23S rRNA (bridge B1a) and protein L5 of the 50S subunit (bridge B1b), connecting the 2 subunits; these bridges are implicated in subunit movement. Contacts the tRNAs in the A and P-sites.</text>
</comment>
<comment type="subunit">
    <text evidence="1">Part of the 30S ribosomal subunit. Forms a loose heterodimer with protein S19. Forms two bridges to the 50S subunit in the 70S ribosome.</text>
</comment>
<comment type="similarity">
    <text evidence="1">Belongs to the universal ribosomal protein uS13 family.</text>
</comment>
<name>RS13_STRP1</name>
<evidence type="ECO:0000255" key="1">
    <source>
        <dbReference type="HAMAP-Rule" id="MF_01315"/>
    </source>
</evidence>
<evidence type="ECO:0000256" key="2">
    <source>
        <dbReference type="SAM" id="MobiDB-lite"/>
    </source>
</evidence>
<evidence type="ECO:0000305" key="3"/>
<sequence length="121" mass="13426">MARIAGVDIPNDKRVVISLTYVYGIGLATSKKILAAAGISEDIRVKDLTSDQEDAIRREVDAIKVEGDLRREVNMNIKRLMEIGSYRGIRHRRGLPVRGQNTKNNARTRKGKAVAIAGKKK</sequence>
<protein>
    <recommendedName>
        <fullName evidence="1">Small ribosomal subunit protein uS13</fullName>
    </recommendedName>
    <alternativeName>
        <fullName evidence="3">30S ribosomal protein S13</fullName>
    </alternativeName>
</protein>
<feature type="chain" id="PRO_0000132151" description="Small ribosomal subunit protein uS13">
    <location>
        <begin position="1"/>
        <end position="121"/>
    </location>
</feature>
<feature type="region of interest" description="Disordered" evidence="2">
    <location>
        <begin position="96"/>
        <end position="121"/>
    </location>
</feature>
<feature type="compositionally biased region" description="Basic residues" evidence="2">
    <location>
        <begin position="106"/>
        <end position="121"/>
    </location>
</feature>